<proteinExistence type="inferred from homology"/>
<reference key="1">
    <citation type="journal article" date="2018" name="Sci. Rep.">
        <title>Genome analysis reveals evolutionary mechanisms of adaptation in systemic dimorphic fungi.</title>
        <authorList>
            <person name="Munoz J.F."/>
            <person name="McEwen J.G."/>
            <person name="Clay O.K."/>
            <person name="Cuomo C.A."/>
        </authorList>
    </citation>
    <scope>NUCLEOTIDE SEQUENCE [LARGE SCALE GENOMIC DNA]</scope>
    <source>
        <strain>UAMH7299</strain>
    </source>
</reference>
<reference key="2">
    <citation type="journal article" date="2023" name="Org. Biomol. Chem.">
        <title>Biosynthetic characterization of the antifungal fernane-type triterpenoid polytolypin for generation of new analogues via combinatorial biosynthesis.</title>
        <authorList>
            <person name="Li X.Y."/>
            <person name="Lv J.M."/>
            <person name="Cao Z.Q."/>
            <person name="Wang G.Q."/>
            <person name="Lin F.L."/>
            <person name="Chen G.D."/>
            <person name="Qin S.Y."/>
            <person name="Hu D."/>
            <person name="Gao H."/>
            <person name="Yao X.S."/>
        </authorList>
    </citation>
    <scope>FUNCTION</scope>
</reference>
<feature type="chain" id="PRO_5012631915" description="Cytochrome P450 monooxygenase polD">
    <location>
        <begin position="1"/>
        <end position="517"/>
    </location>
</feature>
<feature type="transmembrane region" description="Helical" evidence="2">
    <location>
        <begin position="5"/>
        <end position="27"/>
    </location>
</feature>
<feature type="binding site" description="axial binding residue" evidence="1">
    <location>
        <position position="435"/>
    </location>
    <ligand>
        <name>heme</name>
        <dbReference type="ChEBI" id="CHEBI:30413"/>
    </ligand>
    <ligandPart>
        <name>Fe</name>
        <dbReference type="ChEBI" id="CHEBI:18248"/>
    </ligandPart>
</feature>
<comment type="function">
    <text evidence="3">Cytochrome P450 monooxygenase; part of the gene cluster that mediates the biosynthesis of antifungal fernane-type triterpenoid polytolypin (PubMed:36602159). PolD doe not seem to be involved in the biosynthesis of polytolypin (PubMed:36602159). Within the pathway, the triterpene cyclase polA first catalyzes the cyclization of 2,3-oxidosqualene to motiol, polc converts the 4-alpha-methyl group of motiol to a carboxyl group, polB is responsible for appending a hydroxyl group at the 2-alpha position and polE is a dual functional P450, which can catalyze the formation of both the 1-beta-hydroxyl group and 10-beta-carboxyl group (PubMed:36602159).</text>
</comment>
<comment type="cofactor">
    <cofactor evidence="1">
        <name>heme</name>
        <dbReference type="ChEBI" id="CHEBI:30413"/>
    </cofactor>
</comment>
<comment type="subcellular location">
    <subcellularLocation>
        <location evidence="2">Membrane</location>
        <topology evidence="2">Single-pass membrane protein</topology>
    </subcellularLocation>
</comment>
<comment type="similarity">
    <text evidence="5">Belongs to the cytochrome P450 family.</text>
</comment>
<name>POLD_POLH7</name>
<organism>
    <name type="scientific">Polytolypa hystricis (strain UAMH7299)</name>
    <dbReference type="NCBI Taxonomy" id="1447883"/>
    <lineage>
        <taxon>Eukaryota</taxon>
        <taxon>Fungi</taxon>
        <taxon>Dikarya</taxon>
        <taxon>Ascomycota</taxon>
        <taxon>Pezizomycotina</taxon>
        <taxon>Eurotiomycetes</taxon>
        <taxon>Eurotiomycetidae</taxon>
        <taxon>Onygenales</taxon>
        <taxon>Onygenales incertae sedis</taxon>
        <taxon>Polytolypa</taxon>
    </lineage>
</organism>
<gene>
    <name evidence="4" type="primary">polD</name>
    <name type="ORF">AJ80_03959</name>
</gene>
<dbReference type="EC" id="1.-.-.-" evidence="3"/>
<dbReference type="EMBL" id="PDNA01000047">
    <property type="protein sequence ID" value="PGH19458.1"/>
    <property type="molecule type" value="Genomic_DNA"/>
</dbReference>
<dbReference type="SMR" id="A0A2B7YEY0"/>
<dbReference type="STRING" id="1447883.A0A2B7YEY0"/>
<dbReference type="OrthoDB" id="1103324at2759"/>
<dbReference type="Proteomes" id="UP000224634">
    <property type="component" value="Unassembled WGS sequence"/>
</dbReference>
<dbReference type="GO" id="GO:0016020">
    <property type="term" value="C:membrane"/>
    <property type="evidence" value="ECO:0007669"/>
    <property type="project" value="UniProtKB-SubCell"/>
</dbReference>
<dbReference type="GO" id="GO:0020037">
    <property type="term" value="F:heme binding"/>
    <property type="evidence" value="ECO:0007669"/>
    <property type="project" value="InterPro"/>
</dbReference>
<dbReference type="GO" id="GO:0005506">
    <property type="term" value="F:iron ion binding"/>
    <property type="evidence" value="ECO:0007669"/>
    <property type="project" value="InterPro"/>
</dbReference>
<dbReference type="GO" id="GO:0004497">
    <property type="term" value="F:monooxygenase activity"/>
    <property type="evidence" value="ECO:0007669"/>
    <property type="project" value="UniProtKB-KW"/>
</dbReference>
<dbReference type="GO" id="GO:0016705">
    <property type="term" value="F:oxidoreductase activity, acting on paired donors, with incorporation or reduction of molecular oxygen"/>
    <property type="evidence" value="ECO:0007669"/>
    <property type="project" value="InterPro"/>
</dbReference>
<dbReference type="CDD" id="cd11065">
    <property type="entry name" value="CYP64-like"/>
    <property type="match status" value="1"/>
</dbReference>
<dbReference type="Gene3D" id="1.10.630.10">
    <property type="entry name" value="Cytochrome P450"/>
    <property type="match status" value="1"/>
</dbReference>
<dbReference type="InterPro" id="IPR001128">
    <property type="entry name" value="Cyt_P450"/>
</dbReference>
<dbReference type="InterPro" id="IPR002401">
    <property type="entry name" value="Cyt_P450_E_grp-I"/>
</dbReference>
<dbReference type="InterPro" id="IPR036396">
    <property type="entry name" value="Cyt_P450_sf"/>
</dbReference>
<dbReference type="InterPro" id="IPR050364">
    <property type="entry name" value="Cytochrome_P450_fung"/>
</dbReference>
<dbReference type="PANTHER" id="PTHR46300:SF5">
    <property type="entry name" value="CYTOCHROME P450"/>
    <property type="match status" value="1"/>
</dbReference>
<dbReference type="PANTHER" id="PTHR46300">
    <property type="entry name" value="P450, PUTATIVE (EUROFUNG)-RELATED-RELATED"/>
    <property type="match status" value="1"/>
</dbReference>
<dbReference type="Pfam" id="PF00067">
    <property type="entry name" value="p450"/>
    <property type="match status" value="1"/>
</dbReference>
<dbReference type="PRINTS" id="PR00463">
    <property type="entry name" value="EP450I"/>
</dbReference>
<dbReference type="PRINTS" id="PR00385">
    <property type="entry name" value="P450"/>
</dbReference>
<dbReference type="SUPFAM" id="SSF48264">
    <property type="entry name" value="Cytochrome P450"/>
    <property type="match status" value="1"/>
</dbReference>
<protein>
    <recommendedName>
        <fullName evidence="4">Cytochrome P450 monooxygenase polD</fullName>
        <ecNumber evidence="3">1.-.-.-</ecNumber>
    </recommendedName>
    <alternativeName>
        <fullName evidence="4">Polytolypin biosynthesis cluster protein D</fullName>
    </alternativeName>
</protein>
<evidence type="ECO:0000250" key="1">
    <source>
        <dbReference type="UniProtKB" id="P04798"/>
    </source>
</evidence>
<evidence type="ECO:0000255" key="2"/>
<evidence type="ECO:0000269" key="3">
    <source>
    </source>
</evidence>
<evidence type="ECO:0000303" key="4">
    <source>
    </source>
</evidence>
<evidence type="ECO:0000305" key="5"/>
<accession>A0A2B7YEY0</accession>
<keyword id="KW-0349">Heme</keyword>
<keyword id="KW-0408">Iron</keyword>
<keyword id="KW-0472">Membrane</keyword>
<keyword id="KW-0479">Metal-binding</keyword>
<keyword id="KW-0503">Monooxygenase</keyword>
<keyword id="KW-0560">Oxidoreductase</keyword>
<keyword id="KW-1185">Reference proteome</keyword>
<keyword id="KW-0812">Transmembrane</keyword>
<keyword id="KW-1133">Transmembrane helix</keyword>
<sequence>MQLTVVLVGIVVLVLAYLSSTGKVYPHGPQALPILGNLVQFRSLQARPDQELLRIAKKYGQLCMLWFGSNPVLIISSPKAAKDMMDQRGAIYSSRPAQNSFRATQWPWRLVTTPTGETFRLLRKIYHNLLGPQQSLHFRRYQDFESKVMLADLLDRPEAFQLGVERFALSVIFSACYQVRLDDLAHPTMTLFYSIWEQMLKYFQPGSLLLDFFPILQRLPKSMQPWLKLANSLRARELRLHRAFLSTLKKQVQNSTAVACFGTMLVKIQEKENISDERACDILAMLIGAGADTTSSYLQTFFKVIALHPNAALKAQKELDRVVGQDRLPTWDDEPNLPYVRAIIKEVHRWAPIGSLGIPHATTDSDVYDGKHIPRNTIVFPNLTALCRDAERYHNPDLFLPERFLGDDLDAYSSALHPDWRVRDHFHYGFGRRLCQGIFVAEASLYIVVSRLLWGFDIAKEEGESLDMDDKLAGLVTKPKPFRVTIKSRAPSYERVMRQERAIAKTDILSFNDVHFV</sequence>